<accession>P39909</accession>
<reference key="1">
    <citation type="journal article" date="1995" name="J. Bacteriol.">
        <title>Two highly similar multidrug transporters of Bacillus subtilis whose expression is differentially regulated.</title>
        <authorList>
            <person name="Ahmed M."/>
            <person name="Lyass L."/>
            <person name="Markham P.N."/>
            <person name="Taylor S.S."/>
            <person name="Vazquez-Laslop N."/>
            <person name="Neyfakh A.A."/>
        </authorList>
    </citation>
    <scope>NUCLEOTIDE SEQUENCE [GENOMIC DNA]</scope>
    <source>
        <strain>168 / BD170</strain>
    </source>
</reference>
<reference key="2">
    <citation type="journal article" date="1996" name="Microbiology">
        <title>Systematic sequencing of the 283 kb 210 degrees-232 degrees region of the Bacillus subtilis genome containing the skin element and many sporulation genes.</title>
        <authorList>
            <person name="Mizuno M."/>
            <person name="Masuda S."/>
            <person name="Takemaru K."/>
            <person name="Hosono S."/>
            <person name="Sato T."/>
            <person name="Takeuchi M."/>
            <person name="Kobayashi Y."/>
        </authorList>
    </citation>
    <scope>NUCLEOTIDE SEQUENCE [GENOMIC DNA]</scope>
    <source>
        <strain>168 / JH642</strain>
    </source>
</reference>
<reference key="3">
    <citation type="journal article" date="1997" name="Nature">
        <title>The complete genome sequence of the Gram-positive bacterium Bacillus subtilis.</title>
        <authorList>
            <person name="Kunst F."/>
            <person name="Ogasawara N."/>
            <person name="Moszer I."/>
            <person name="Albertini A.M."/>
            <person name="Alloni G."/>
            <person name="Azevedo V."/>
            <person name="Bertero M.G."/>
            <person name="Bessieres P."/>
            <person name="Bolotin A."/>
            <person name="Borchert S."/>
            <person name="Borriss R."/>
            <person name="Boursier L."/>
            <person name="Brans A."/>
            <person name="Braun M."/>
            <person name="Brignell S.C."/>
            <person name="Bron S."/>
            <person name="Brouillet S."/>
            <person name="Bruschi C.V."/>
            <person name="Caldwell B."/>
            <person name="Capuano V."/>
            <person name="Carter N.M."/>
            <person name="Choi S.-K."/>
            <person name="Codani J.-J."/>
            <person name="Connerton I.F."/>
            <person name="Cummings N.J."/>
            <person name="Daniel R.A."/>
            <person name="Denizot F."/>
            <person name="Devine K.M."/>
            <person name="Duesterhoeft A."/>
            <person name="Ehrlich S.D."/>
            <person name="Emmerson P.T."/>
            <person name="Entian K.-D."/>
            <person name="Errington J."/>
            <person name="Fabret C."/>
            <person name="Ferrari E."/>
            <person name="Foulger D."/>
            <person name="Fritz C."/>
            <person name="Fujita M."/>
            <person name="Fujita Y."/>
            <person name="Fuma S."/>
            <person name="Galizzi A."/>
            <person name="Galleron N."/>
            <person name="Ghim S.-Y."/>
            <person name="Glaser P."/>
            <person name="Goffeau A."/>
            <person name="Golightly E.J."/>
            <person name="Grandi G."/>
            <person name="Guiseppi G."/>
            <person name="Guy B.J."/>
            <person name="Haga K."/>
            <person name="Haiech J."/>
            <person name="Harwood C.R."/>
            <person name="Henaut A."/>
            <person name="Hilbert H."/>
            <person name="Holsappel S."/>
            <person name="Hosono S."/>
            <person name="Hullo M.-F."/>
            <person name="Itaya M."/>
            <person name="Jones L.-M."/>
            <person name="Joris B."/>
            <person name="Karamata D."/>
            <person name="Kasahara Y."/>
            <person name="Klaerr-Blanchard M."/>
            <person name="Klein C."/>
            <person name="Kobayashi Y."/>
            <person name="Koetter P."/>
            <person name="Koningstein G."/>
            <person name="Krogh S."/>
            <person name="Kumano M."/>
            <person name="Kurita K."/>
            <person name="Lapidus A."/>
            <person name="Lardinois S."/>
            <person name="Lauber J."/>
            <person name="Lazarevic V."/>
            <person name="Lee S.-M."/>
            <person name="Levine A."/>
            <person name="Liu H."/>
            <person name="Masuda S."/>
            <person name="Mauel C."/>
            <person name="Medigue C."/>
            <person name="Medina N."/>
            <person name="Mellado R.P."/>
            <person name="Mizuno M."/>
            <person name="Moestl D."/>
            <person name="Nakai S."/>
            <person name="Noback M."/>
            <person name="Noone D."/>
            <person name="O'Reilly M."/>
            <person name="Ogawa K."/>
            <person name="Ogiwara A."/>
            <person name="Oudega B."/>
            <person name="Park S.-H."/>
            <person name="Parro V."/>
            <person name="Pohl T.M."/>
            <person name="Portetelle D."/>
            <person name="Porwollik S."/>
            <person name="Prescott A.M."/>
            <person name="Presecan E."/>
            <person name="Pujic P."/>
            <person name="Purnelle B."/>
            <person name="Rapoport G."/>
            <person name="Rey M."/>
            <person name="Reynolds S."/>
            <person name="Rieger M."/>
            <person name="Rivolta C."/>
            <person name="Rocha E."/>
            <person name="Roche B."/>
            <person name="Rose M."/>
            <person name="Sadaie Y."/>
            <person name="Sato T."/>
            <person name="Scanlan E."/>
            <person name="Schleich S."/>
            <person name="Schroeter R."/>
            <person name="Scoffone F."/>
            <person name="Sekiguchi J."/>
            <person name="Sekowska A."/>
            <person name="Seror S.J."/>
            <person name="Serror P."/>
            <person name="Shin B.-S."/>
            <person name="Soldo B."/>
            <person name="Sorokin A."/>
            <person name="Tacconi E."/>
            <person name="Takagi T."/>
            <person name="Takahashi H."/>
            <person name="Takemaru K."/>
            <person name="Takeuchi M."/>
            <person name="Tamakoshi A."/>
            <person name="Tanaka T."/>
            <person name="Terpstra P."/>
            <person name="Tognoni A."/>
            <person name="Tosato V."/>
            <person name="Uchiyama S."/>
            <person name="Vandenbol M."/>
            <person name="Vannier F."/>
            <person name="Vassarotti A."/>
            <person name="Viari A."/>
            <person name="Wambutt R."/>
            <person name="Wedler E."/>
            <person name="Wedler H."/>
            <person name="Weitzenegger T."/>
            <person name="Winters P."/>
            <person name="Wipat A."/>
            <person name="Yamamoto H."/>
            <person name="Yamane K."/>
            <person name="Yasumoto K."/>
            <person name="Yata K."/>
            <person name="Yoshida K."/>
            <person name="Yoshikawa H.-F."/>
            <person name="Zumstein E."/>
            <person name="Yoshikawa H."/>
            <person name="Danchin A."/>
        </authorList>
    </citation>
    <scope>NUCLEOTIDE SEQUENCE [LARGE SCALE GENOMIC DNA]</scope>
    <source>
        <strain>168</strain>
    </source>
</reference>
<reference key="4">
    <citation type="journal article" date="1999" name="Biochem. J.">
        <title>Characterization of a novel spermidine/spermine acetyltransferase, BltD, from Bacillus subtilis.</title>
        <authorList>
            <person name="Woolridge D.P."/>
            <person name="Martinez J.D."/>
            <person name="Stringer D.E."/>
            <person name="Gerner E.W."/>
        </authorList>
    </citation>
    <scope>FUNCTION</scope>
    <scope>CATALYTIC ACTIVITY</scope>
    <scope>ACTIVITY REGULATION</scope>
    <scope>BIOPHYSICOCHEMICAL PROPERTIES</scope>
</reference>
<feature type="chain" id="PRO_0000064945" description="Spermine/spermidine N(1)-acetyltransferase">
    <location>
        <begin position="1"/>
        <end position="152"/>
    </location>
</feature>
<feature type="domain" description="N-acetyltransferase" evidence="3">
    <location>
        <begin position="3"/>
        <end position="152"/>
    </location>
</feature>
<feature type="active site" description="Proton donor" evidence="1">
    <location>
        <position position="129"/>
    </location>
</feature>
<feature type="binding site" evidence="2">
    <location>
        <begin position="82"/>
        <end position="84"/>
    </location>
    <ligand>
        <name>acetyl-CoA</name>
        <dbReference type="ChEBI" id="CHEBI:57288"/>
    </ligand>
</feature>
<feature type="binding site" evidence="2">
    <location>
        <begin position="89"/>
        <end position="95"/>
    </location>
    <ligand>
        <name>acetyl-CoA</name>
        <dbReference type="ChEBI" id="CHEBI:57288"/>
    </ligand>
</feature>
<feature type="binding site" evidence="2">
    <location>
        <begin position="122"/>
        <end position="131"/>
    </location>
    <ligand>
        <name>acetyl-CoA</name>
        <dbReference type="ChEBI" id="CHEBI:57288"/>
    </ligand>
</feature>
<feature type="sequence conflict" description="In Ref. 1; AAC36945." evidence="5" ref="1">
    <original>D</original>
    <variation>I</variation>
    <location>
        <position position="85"/>
    </location>
</feature>
<keyword id="KW-0012">Acyltransferase</keyword>
<keyword id="KW-1185">Reference proteome</keyword>
<keyword id="KW-0808">Transferase</keyword>
<dbReference type="EC" id="2.3.1.57" evidence="4"/>
<dbReference type="EMBL" id="L32599">
    <property type="protein sequence ID" value="AAC36945.1"/>
    <property type="molecule type" value="Genomic_DNA"/>
</dbReference>
<dbReference type="EMBL" id="D84432">
    <property type="protein sequence ID" value="BAA12354.1"/>
    <property type="molecule type" value="Genomic_DNA"/>
</dbReference>
<dbReference type="EMBL" id="AL009126">
    <property type="protein sequence ID" value="CAB14601.1"/>
    <property type="molecule type" value="Genomic_DNA"/>
</dbReference>
<dbReference type="PIR" id="B69595">
    <property type="entry name" value="B69595"/>
</dbReference>
<dbReference type="RefSeq" id="NP_390537.1">
    <property type="nucleotide sequence ID" value="NC_000964.3"/>
</dbReference>
<dbReference type="RefSeq" id="WP_003229879.1">
    <property type="nucleotide sequence ID" value="NZ_OZ025638.1"/>
</dbReference>
<dbReference type="SMR" id="P39909"/>
<dbReference type="FunCoup" id="P39909">
    <property type="interactions" value="25"/>
</dbReference>
<dbReference type="STRING" id="224308.BSU26600"/>
<dbReference type="PaxDb" id="224308-BSU26600"/>
<dbReference type="EnsemblBacteria" id="CAB14601">
    <property type="protein sequence ID" value="CAB14601"/>
    <property type="gene ID" value="BSU_26600"/>
</dbReference>
<dbReference type="GeneID" id="937632"/>
<dbReference type="KEGG" id="bsu:BSU26600"/>
<dbReference type="PATRIC" id="fig|224308.179.peg.2890"/>
<dbReference type="eggNOG" id="COG0456">
    <property type="taxonomic scope" value="Bacteria"/>
</dbReference>
<dbReference type="InParanoid" id="P39909"/>
<dbReference type="OrthoDB" id="9127144at2"/>
<dbReference type="PhylomeDB" id="P39909"/>
<dbReference type="BioCyc" id="BSUB:BSU26600-MONOMER"/>
<dbReference type="UniPathway" id="UPA00211"/>
<dbReference type="UniPathway" id="UPA00250"/>
<dbReference type="Proteomes" id="UP000001570">
    <property type="component" value="Chromosome"/>
</dbReference>
<dbReference type="GO" id="GO:0004145">
    <property type="term" value="F:diamine N-acetyltransferase activity"/>
    <property type="evidence" value="ECO:0007669"/>
    <property type="project" value="UniProtKB-EC"/>
</dbReference>
<dbReference type="GO" id="GO:0046203">
    <property type="term" value="P:spermidine catabolic process"/>
    <property type="evidence" value="ECO:0007669"/>
    <property type="project" value="UniProtKB-UniPathway"/>
</dbReference>
<dbReference type="GO" id="GO:0046208">
    <property type="term" value="P:spermine catabolic process"/>
    <property type="evidence" value="ECO:0007669"/>
    <property type="project" value="UniProtKB-UniPathway"/>
</dbReference>
<dbReference type="CDD" id="cd04301">
    <property type="entry name" value="NAT_SF"/>
    <property type="match status" value="1"/>
</dbReference>
<dbReference type="Gene3D" id="3.40.630.30">
    <property type="match status" value="1"/>
</dbReference>
<dbReference type="Gene3D" id="1.10.287.900">
    <property type="entry name" value="The crystal structure of the spermine/spermidine acetyltransferase from enterococcus faecali"/>
    <property type="match status" value="1"/>
</dbReference>
<dbReference type="InterPro" id="IPR016181">
    <property type="entry name" value="Acyl_CoA_acyltransferase"/>
</dbReference>
<dbReference type="InterPro" id="IPR000182">
    <property type="entry name" value="GNAT_dom"/>
</dbReference>
<dbReference type="InterPro" id="IPR050276">
    <property type="entry name" value="MshD_Acetyltransferase"/>
</dbReference>
<dbReference type="InterPro" id="IPR027455">
    <property type="entry name" value="Sper_AcTfrase_N"/>
</dbReference>
<dbReference type="PANTHER" id="PTHR43617">
    <property type="entry name" value="L-AMINO ACID N-ACETYLTRANSFERASE"/>
    <property type="match status" value="1"/>
</dbReference>
<dbReference type="Pfam" id="PF00583">
    <property type="entry name" value="Acetyltransf_1"/>
    <property type="match status" value="1"/>
</dbReference>
<dbReference type="SUPFAM" id="SSF55729">
    <property type="entry name" value="Acyl-CoA N-acyltransferases (Nat)"/>
    <property type="match status" value="1"/>
</dbReference>
<dbReference type="PROSITE" id="PS51186">
    <property type="entry name" value="GNAT"/>
    <property type="match status" value="1"/>
</dbReference>
<protein>
    <recommendedName>
        <fullName evidence="5">Spermine/spermidine N(1)-acetyltransferase</fullName>
        <ecNumber evidence="4">2.3.1.57</ecNumber>
    </recommendedName>
</protein>
<comment type="function">
    <text evidence="4">Acetylates both spermidine and spermine at primary propyl amine moieties, with spermine being the preferred substrate.</text>
</comment>
<comment type="catalytic activity">
    <reaction evidence="4">
        <text>an alkane-alpha,omega-diamine + acetyl-CoA = an N-acetylalkane-alpha,omega-diamine + CoA + H(+)</text>
        <dbReference type="Rhea" id="RHEA:11116"/>
        <dbReference type="Rhea" id="RHEA-COMP:9766"/>
        <dbReference type="Rhea" id="RHEA-COMP:9767"/>
        <dbReference type="ChEBI" id="CHEBI:15378"/>
        <dbReference type="ChEBI" id="CHEBI:57287"/>
        <dbReference type="ChEBI" id="CHEBI:57288"/>
        <dbReference type="ChEBI" id="CHEBI:70977"/>
        <dbReference type="ChEBI" id="CHEBI:70988"/>
        <dbReference type="EC" id="2.3.1.57"/>
    </reaction>
</comment>
<comment type="catalytic activity">
    <reaction evidence="4">
        <text>spermine + acetyl-CoA = N(1)-acetylspermine + CoA + H(+)</text>
        <dbReference type="Rhea" id="RHEA:33099"/>
        <dbReference type="ChEBI" id="CHEBI:15378"/>
        <dbReference type="ChEBI" id="CHEBI:45725"/>
        <dbReference type="ChEBI" id="CHEBI:57287"/>
        <dbReference type="ChEBI" id="CHEBI:57288"/>
        <dbReference type="ChEBI" id="CHEBI:58101"/>
        <dbReference type="EC" id="2.3.1.57"/>
    </reaction>
</comment>
<comment type="catalytic activity">
    <reaction evidence="4">
        <text>spermidine + acetyl-CoA = N(1)-acetylspermidine + CoA + H(+)</text>
        <dbReference type="Rhea" id="RHEA:28150"/>
        <dbReference type="ChEBI" id="CHEBI:15378"/>
        <dbReference type="ChEBI" id="CHEBI:57287"/>
        <dbReference type="ChEBI" id="CHEBI:57288"/>
        <dbReference type="ChEBI" id="CHEBI:57834"/>
        <dbReference type="ChEBI" id="CHEBI:58324"/>
        <dbReference type="EC" id="2.3.1.57"/>
    </reaction>
</comment>
<comment type="activity regulation">
    <text evidence="4">Putrescine and N(8)-acetylspermidine are competitive inhibitors of spermidine acetylation.</text>
</comment>
<comment type="biophysicochemical properties">
    <kinetics>
        <KM evidence="4">67 uM for spermine</KM>
        <KM evidence="4">1200 uM for N(1)-acetylspermine</KM>
        <KM evidence="4">200 uM for spermidine</KM>
        <KM evidence="4">95 uM for acetyl-CoA</KM>
        <Vmax evidence="4">19.5 nmol/min/mg enzyme with spermine as substrate</Vmax>
        <Vmax evidence="4">7.4 nmol/min/mg enzyme with N(1)-acetylspermine as substrate</Vmax>
        <Vmax evidence="4">0.6 nmol/min/mg enzyme with spermidine as substrate</Vmax>
    </kinetics>
</comment>
<comment type="pathway">
    <text evidence="5">Amine and polyamine degradation; spermine degradation.</text>
</comment>
<comment type="pathway">
    <text evidence="5">Amine and polyamine degradation; spermidine degradation.</text>
</comment>
<comment type="similarity">
    <text evidence="5">Belongs to the acetyltransferase family.</text>
</comment>
<sequence length="152" mass="17838">MSINIKAVTDDNRAAILDLHVSQNQLSYIESTKVCLEDAKECHYYKPVGLYYEGDLVGFAMYGLFPEYDEDNKNGRVWLDRFFIDERYQGKGLGKKMLKALIQHLAELYKCKRIYLSIFENNIHAIRLYQRFGFQFNGELDFNGEKVMVKEL</sequence>
<evidence type="ECO:0000250" key="1">
    <source>
        <dbReference type="UniProtKB" id="P0A951"/>
    </source>
</evidence>
<evidence type="ECO:0000250" key="2">
    <source>
        <dbReference type="UniProtKB" id="Q9KL03"/>
    </source>
</evidence>
<evidence type="ECO:0000255" key="3">
    <source>
        <dbReference type="PROSITE-ProRule" id="PRU00532"/>
    </source>
</evidence>
<evidence type="ECO:0000269" key="4">
    <source>
    </source>
</evidence>
<evidence type="ECO:0000305" key="5"/>
<proteinExistence type="evidence at protein level"/>
<gene>
    <name type="primary">bltD</name>
    <name type="synonym">bmr2D</name>
    <name type="synonym">bmtD</name>
    <name type="ordered locus">BSU26600</name>
</gene>
<organism>
    <name type="scientific">Bacillus subtilis (strain 168)</name>
    <dbReference type="NCBI Taxonomy" id="224308"/>
    <lineage>
        <taxon>Bacteria</taxon>
        <taxon>Bacillati</taxon>
        <taxon>Bacillota</taxon>
        <taxon>Bacilli</taxon>
        <taxon>Bacillales</taxon>
        <taxon>Bacillaceae</taxon>
        <taxon>Bacillus</taxon>
    </lineage>
</organism>
<name>BLTD_BACSU</name>